<keyword id="KW-0963">Cytoplasm</keyword>
<keyword id="KW-0489">Methyltransferase</keyword>
<keyword id="KW-0949">S-adenosyl-L-methionine</keyword>
<keyword id="KW-0808">Transferase</keyword>
<reference key="1">
    <citation type="submission" date="2007-04" db="EMBL/GenBank/DDBJ databases">
        <title>Complete sequence of Pseudomonas mendocina ymp.</title>
        <authorList>
            <consortium name="US DOE Joint Genome Institute"/>
            <person name="Copeland A."/>
            <person name="Lucas S."/>
            <person name="Lapidus A."/>
            <person name="Barry K."/>
            <person name="Glavina del Rio T."/>
            <person name="Dalin E."/>
            <person name="Tice H."/>
            <person name="Pitluck S."/>
            <person name="Kiss H."/>
            <person name="Brettin T."/>
            <person name="Detter J.C."/>
            <person name="Bruce D."/>
            <person name="Han C."/>
            <person name="Schmutz J."/>
            <person name="Larimer F."/>
            <person name="Land M."/>
            <person name="Hauser L."/>
            <person name="Kyrpides N."/>
            <person name="Mikhailova N."/>
            <person name="Hersman L."/>
            <person name="Dubois J."/>
            <person name="Maurice P."/>
            <person name="Richardson P."/>
        </authorList>
    </citation>
    <scope>NUCLEOTIDE SEQUENCE [LARGE SCALE GENOMIC DNA]</scope>
    <source>
        <strain>ymp</strain>
    </source>
</reference>
<feature type="chain" id="PRO_1000046069" description="Ribosomal protein L11 methyltransferase">
    <location>
        <begin position="1"/>
        <end position="292"/>
    </location>
</feature>
<feature type="binding site" evidence="1">
    <location>
        <position position="144"/>
    </location>
    <ligand>
        <name>S-adenosyl-L-methionine</name>
        <dbReference type="ChEBI" id="CHEBI:59789"/>
    </ligand>
</feature>
<feature type="binding site" evidence="1">
    <location>
        <position position="165"/>
    </location>
    <ligand>
        <name>S-adenosyl-L-methionine</name>
        <dbReference type="ChEBI" id="CHEBI:59789"/>
    </ligand>
</feature>
<feature type="binding site" evidence="1">
    <location>
        <position position="187"/>
    </location>
    <ligand>
        <name>S-adenosyl-L-methionine</name>
        <dbReference type="ChEBI" id="CHEBI:59789"/>
    </ligand>
</feature>
<feature type="binding site" evidence="1">
    <location>
        <position position="229"/>
    </location>
    <ligand>
        <name>S-adenosyl-L-methionine</name>
        <dbReference type="ChEBI" id="CHEBI:59789"/>
    </ligand>
</feature>
<sequence>MPWLQVRLAITPEQAETFEDALLEVGAVSVTFMDAEDQPIFEPDLGTTPLWSHTHLLALFEADTDETALIAHLQLLCGGTLPEHHVERIEDQDWERSWMDNFQPMRFGQRLWIVPSWHAAPEPDAVNLLLDPGLAFGTGTHPTTALCLEWLDGQNLDGCRVLDFGCGSGILAIAALLLGAPQAVGTDIDPQALEASRDNANRNGIDPARFPVYLPADLPQQPAEVVVANILAGPLVSLAPQITALVQEGGRLALSGILAEQAEEVRAAYAGAFDLDPTAIKDGWVRISGVKR</sequence>
<name>PRMA_ECTM1</name>
<accession>A4XQ64</accession>
<dbReference type="EC" id="2.1.1.-" evidence="1"/>
<dbReference type="EMBL" id="CP000680">
    <property type="protein sequence ID" value="ABP83480.1"/>
    <property type="molecule type" value="Genomic_DNA"/>
</dbReference>
<dbReference type="SMR" id="A4XQ64"/>
<dbReference type="STRING" id="399739.Pmen_0712"/>
<dbReference type="KEGG" id="pmy:Pmen_0712"/>
<dbReference type="PATRIC" id="fig|399739.8.peg.722"/>
<dbReference type="eggNOG" id="COG2264">
    <property type="taxonomic scope" value="Bacteria"/>
</dbReference>
<dbReference type="HOGENOM" id="CLU_049382_4_1_6"/>
<dbReference type="OrthoDB" id="9785995at2"/>
<dbReference type="GO" id="GO:0005829">
    <property type="term" value="C:cytosol"/>
    <property type="evidence" value="ECO:0007669"/>
    <property type="project" value="TreeGrafter"/>
</dbReference>
<dbReference type="GO" id="GO:0016279">
    <property type="term" value="F:protein-lysine N-methyltransferase activity"/>
    <property type="evidence" value="ECO:0007669"/>
    <property type="project" value="TreeGrafter"/>
</dbReference>
<dbReference type="GO" id="GO:0032259">
    <property type="term" value="P:methylation"/>
    <property type="evidence" value="ECO:0007669"/>
    <property type="project" value="UniProtKB-KW"/>
</dbReference>
<dbReference type="CDD" id="cd02440">
    <property type="entry name" value="AdoMet_MTases"/>
    <property type="match status" value="1"/>
</dbReference>
<dbReference type="Gene3D" id="3.40.50.150">
    <property type="entry name" value="Vaccinia Virus protein VP39"/>
    <property type="match status" value="1"/>
</dbReference>
<dbReference type="HAMAP" id="MF_00735">
    <property type="entry name" value="Methyltr_PrmA"/>
    <property type="match status" value="1"/>
</dbReference>
<dbReference type="InterPro" id="IPR050078">
    <property type="entry name" value="Ribosomal_L11_MeTrfase_PrmA"/>
</dbReference>
<dbReference type="InterPro" id="IPR004498">
    <property type="entry name" value="Ribosomal_PrmA_MeTrfase"/>
</dbReference>
<dbReference type="InterPro" id="IPR029063">
    <property type="entry name" value="SAM-dependent_MTases_sf"/>
</dbReference>
<dbReference type="NCBIfam" id="TIGR00406">
    <property type="entry name" value="prmA"/>
    <property type="match status" value="1"/>
</dbReference>
<dbReference type="PANTHER" id="PTHR43648">
    <property type="entry name" value="ELECTRON TRANSFER FLAVOPROTEIN BETA SUBUNIT LYSINE METHYLTRANSFERASE"/>
    <property type="match status" value="1"/>
</dbReference>
<dbReference type="PANTHER" id="PTHR43648:SF1">
    <property type="entry name" value="ELECTRON TRANSFER FLAVOPROTEIN BETA SUBUNIT LYSINE METHYLTRANSFERASE"/>
    <property type="match status" value="1"/>
</dbReference>
<dbReference type="Pfam" id="PF06325">
    <property type="entry name" value="PrmA"/>
    <property type="match status" value="1"/>
</dbReference>
<dbReference type="PIRSF" id="PIRSF000401">
    <property type="entry name" value="RPL11_MTase"/>
    <property type="match status" value="1"/>
</dbReference>
<dbReference type="SUPFAM" id="SSF53335">
    <property type="entry name" value="S-adenosyl-L-methionine-dependent methyltransferases"/>
    <property type="match status" value="1"/>
</dbReference>
<organism>
    <name type="scientific">Ectopseudomonas mendocina (strain ymp)</name>
    <name type="common">Pseudomonas mendocina</name>
    <dbReference type="NCBI Taxonomy" id="399739"/>
    <lineage>
        <taxon>Bacteria</taxon>
        <taxon>Pseudomonadati</taxon>
        <taxon>Pseudomonadota</taxon>
        <taxon>Gammaproteobacteria</taxon>
        <taxon>Pseudomonadales</taxon>
        <taxon>Pseudomonadaceae</taxon>
        <taxon>Ectopseudomonas</taxon>
    </lineage>
</organism>
<proteinExistence type="inferred from homology"/>
<comment type="function">
    <text evidence="1">Methylates ribosomal protein L11.</text>
</comment>
<comment type="catalytic activity">
    <reaction evidence="1">
        <text>L-lysyl-[protein] + 3 S-adenosyl-L-methionine = N(6),N(6),N(6)-trimethyl-L-lysyl-[protein] + 3 S-adenosyl-L-homocysteine + 3 H(+)</text>
        <dbReference type="Rhea" id="RHEA:54192"/>
        <dbReference type="Rhea" id="RHEA-COMP:9752"/>
        <dbReference type="Rhea" id="RHEA-COMP:13826"/>
        <dbReference type="ChEBI" id="CHEBI:15378"/>
        <dbReference type="ChEBI" id="CHEBI:29969"/>
        <dbReference type="ChEBI" id="CHEBI:57856"/>
        <dbReference type="ChEBI" id="CHEBI:59789"/>
        <dbReference type="ChEBI" id="CHEBI:61961"/>
    </reaction>
</comment>
<comment type="subcellular location">
    <subcellularLocation>
        <location evidence="1">Cytoplasm</location>
    </subcellularLocation>
</comment>
<comment type="similarity">
    <text evidence="1">Belongs to the methyltransferase superfamily. PrmA family.</text>
</comment>
<evidence type="ECO:0000255" key="1">
    <source>
        <dbReference type="HAMAP-Rule" id="MF_00735"/>
    </source>
</evidence>
<protein>
    <recommendedName>
        <fullName evidence="1">Ribosomal protein L11 methyltransferase</fullName>
        <shortName evidence="1">L11 Mtase</shortName>
        <ecNumber evidence="1">2.1.1.-</ecNumber>
    </recommendedName>
</protein>
<gene>
    <name evidence="1" type="primary">prmA</name>
    <name type="ordered locus">Pmen_0712</name>
</gene>